<sequence length="507" mass="55353">MATLRADEISNIIRERIEQYTREVKVVNTGTVLQVGDGIARIHGLDEVMAGELVEFEEGTIGIALNLESNNVGVVLMGDGLTIQEGSSVKATGRIAQIPVSEAYLGRVVNALAKPIDGRGEIAASEFRLIESPAPGIISRRSVYEPLQTGLIAIDSMIPVGRGQRELIIGDRQTGKTAVATDTILNQKGQNVICVYVAIGQKASSVAQVVTNFQERGAMEYTIVVAETADSPATLQYLAPYTGAALAEYFMYRERHTSIIYDDLSKQAQAYRQMSLLLRRPPGREAYPGDVFYLHSRLLERAAKSSSRLGEGSMTALPIVETQSGDVSAYIPTNVISITDGQIFLSADLFNAGIRPAINVGISVSRVGSAAQIKAMKQVAGKSKLELAQFAELEAFAQFASDLDKATQNQLARGKRLRELLKQSQSEPLAVDEQVVTIYTGTNGYLDTLEIGQVKEFLVKLRTYLKKNKPQFQEIISSTKTFTEEAEALLKEAIQEQLELFLLQEQT</sequence>
<evidence type="ECO:0000255" key="1">
    <source>
        <dbReference type="HAMAP-Rule" id="MF_01346"/>
    </source>
</evidence>
<feature type="chain" id="PRO_0000339066" description="ATP synthase subunit alpha, chloroplastic">
    <location>
        <begin position="1"/>
        <end position="507"/>
    </location>
</feature>
<feature type="binding site" evidence="1">
    <location>
        <begin position="170"/>
        <end position="177"/>
    </location>
    <ligand>
        <name>ATP</name>
        <dbReference type="ChEBI" id="CHEBI:30616"/>
    </ligand>
</feature>
<feature type="site" description="Required for activity" evidence="1">
    <location>
        <position position="363"/>
    </location>
</feature>
<dbReference type="EC" id="7.1.2.2" evidence="1"/>
<dbReference type="EMBL" id="EU273602">
    <property type="protein sequence ID" value="ABX38729.1"/>
    <property type="molecule type" value="Genomic_DNA"/>
</dbReference>
<dbReference type="RefSeq" id="YP_001586167.1">
    <property type="nucleotide sequence ID" value="NC_010093.1"/>
</dbReference>
<dbReference type="SMR" id="A9LYH0"/>
<dbReference type="GeneID" id="5777767"/>
<dbReference type="GO" id="GO:0009535">
    <property type="term" value="C:chloroplast thylakoid membrane"/>
    <property type="evidence" value="ECO:0007669"/>
    <property type="project" value="UniProtKB-SubCell"/>
</dbReference>
<dbReference type="GO" id="GO:0045259">
    <property type="term" value="C:proton-transporting ATP synthase complex"/>
    <property type="evidence" value="ECO:0007669"/>
    <property type="project" value="UniProtKB-KW"/>
</dbReference>
<dbReference type="GO" id="GO:0043531">
    <property type="term" value="F:ADP binding"/>
    <property type="evidence" value="ECO:0007669"/>
    <property type="project" value="TreeGrafter"/>
</dbReference>
<dbReference type="GO" id="GO:0005524">
    <property type="term" value="F:ATP binding"/>
    <property type="evidence" value="ECO:0007669"/>
    <property type="project" value="UniProtKB-UniRule"/>
</dbReference>
<dbReference type="GO" id="GO:0046933">
    <property type="term" value="F:proton-transporting ATP synthase activity, rotational mechanism"/>
    <property type="evidence" value="ECO:0007669"/>
    <property type="project" value="UniProtKB-UniRule"/>
</dbReference>
<dbReference type="CDD" id="cd18113">
    <property type="entry name" value="ATP-synt_F1_alpha_C"/>
    <property type="match status" value="1"/>
</dbReference>
<dbReference type="CDD" id="cd18116">
    <property type="entry name" value="ATP-synt_F1_alpha_N"/>
    <property type="match status" value="1"/>
</dbReference>
<dbReference type="CDD" id="cd01132">
    <property type="entry name" value="F1-ATPase_alpha_CD"/>
    <property type="match status" value="1"/>
</dbReference>
<dbReference type="FunFam" id="1.20.150.20:FF:000001">
    <property type="entry name" value="ATP synthase subunit alpha"/>
    <property type="match status" value="1"/>
</dbReference>
<dbReference type="FunFam" id="2.40.30.20:FF:000001">
    <property type="entry name" value="ATP synthase subunit alpha"/>
    <property type="match status" value="1"/>
</dbReference>
<dbReference type="FunFam" id="3.40.50.300:FF:000002">
    <property type="entry name" value="ATP synthase subunit alpha"/>
    <property type="match status" value="1"/>
</dbReference>
<dbReference type="Gene3D" id="2.40.30.20">
    <property type="match status" value="1"/>
</dbReference>
<dbReference type="Gene3D" id="1.20.150.20">
    <property type="entry name" value="ATP synthase alpha/beta chain, C-terminal domain"/>
    <property type="match status" value="1"/>
</dbReference>
<dbReference type="Gene3D" id="3.40.50.300">
    <property type="entry name" value="P-loop containing nucleotide triphosphate hydrolases"/>
    <property type="match status" value="1"/>
</dbReference>
<dbReference type="HAMAP" id="MF_01346">
    <property type="entry name" value="ATP_synth_alpha_bact"/>
    <property type="match status" value="1"/>
</dbReference>
<dbReference type="InterPro" id="IPR023366">
    <property type="entry name" value="ATP_synth_asu-like_sf"/>
</dbReference>
<dbReference type="InterPro" id="IPR000793">
    <property type="entry name" value="ATP_synth_asu_C"/>
</dbReference>
<dbReference type="InterPro" id="IPR038376">
    <property type="entry name" value="ATP_synth_asu_C_sf"/>
</dbReference>
<dbReference type="InterPro" id="IPR033732">
    <property type="entry name" value="ATP_synth_F1_a_nt-bd_dom"/>
</dbReference>
<dbReference type="InterPro" id="IPR005294">
    <property type="entry name" value="ATP_synth_F1_asu"/>
</dbReference>
<dbReference type="InterPro" id="IPR020003">
    <property type="entry name" value="ATPase_a/bsu_AS"/>
</dbReference>
<dbReference type="InterPro" id="IPR004100">
    <property type="entry name" value="ATPase_F1/V1/A1_a/bsu_N"/>
</dbReference>
<dbReference type="InterPro" id="IPR036121">
    <property type="entry name" value="ATPase_F1/V1/A1_a/bsu_N_sf"/>
</dbReference>
<dbReference type="InterPro" id="IPR000194">
    <property type="entry name" value="ATPase_F1/V1/A1_a/bsu_nucl-bd"/>
</dbReference>
<dbReference type="InterPro" id="IPR027417">
    <property type="entry name" value="P-loop_NTPase"/>
</dbReference>
<dbReference type="NCBIfam" id="TIGR00962">
    <property type="entry name" value="atpA"/>
    <property type="match status" value="1"/>
</dbReference>
<dbReference type="NCBIfam" id="NF009884">
    <property type="entry name" value="PRK13343.1"/>
    <property type="match status" value="1"/>
</dbReference>
<dbReference type="PANTHER" id="PTHR48082">
    <property type="entry name" value="ATP SYNTHASE SUBUNIT ALPHA, MITOCHONDRIAL"/>
    <property type="match status" value="1"/>
</dbReference>
<dbReference type="PANTHER" id="PTHR48082:SF2">
    <property type="entry name" value="ATP SYNTHASE SUBUNIT ALPHA, MITOCHONDRIAL"/>
    <property type="match status" value="1"/>
</dbReference>
<dbReference type="Pfam" id="PF00006">
    <property type="entry name" value="ATP-synt_ab"/>
    <property type="match status" value="1"/>
</dbReference>
<dbReference type="Pfam" id="PF00306">
    <property type="entry name" value="ATP-synt_ab_C"/>
    <property type="match status" value="1"/>
</dbReference>
<dbReference type="Pfam" id="PF02874">
    <property type="entry name" value="ATP-synt_ab_N"/>
    <property type="match status" value="1"/>
</dbReference>
<dbReference type="PIRSF" id="PIRSF039088">
    <property type="entry name" value="F_ATPase_subunit_alpha"/>
    <property type="match status" value="1"/>
</dbReference>
<dbReference type="SUPFAM" id="SSF47917">
    <property type="entry name" value="C-terminal domain of alpha and beta subunits of F1 ATP synthase"/>
    <property type="match status" value="1"/>
</dbReference>
<dbReference type="SUPFAM" id="SSF50615">
    <property type="entry name" value="N-terminal domain of alpha and beta subunits of F1 ATP synthase"/>
    <property type="match status" value="1"/>
</dbReference>
<dbReference type="SUPFAM" id="SSF52540">
    <property type="entry name" value="P-loop containing nucleoside triphosphate hydrolases"/>
    <property type="match status" value="1"/>
</dbReference>
<dbReference type="PROSITE" id="PS00152">
    <property type="entry name" value="ATPASE_ALPHA_BETA"/>
    <property type="match status" value="1"/>
</dbReference>
<name>ATPA_ACOCI</name>
<protein>
    <recommendedName>
        <fullName evidence="1">ATP synthase subunit alpha, chloroplastic</fullName>
        <ecNumber evidence="1">7.1.2.2</ecNumber>
    </recommendedName>
    <alternativeName>
        <fullName evidence="1">ATP synthase F1 sector subunit alpha</fullName>
    </alternativeName>
    <alternativeName>
        <fullName evidence="1">F-ATPase subunit alpha</fullName>
    </alternativeName>
</protein>
<organism>
    <name type="scientific">Acorus calamus var. americanus</name>
    <name type="common">American sweet flag</name>
    <name type="synonym">Acorus americanus</name>
    <dbReference type="NCBI Taxonomy" id="263995"/>
    <lineage>
        <taxon>Eukaryota</taxon>
        <taxon>Viridiplantae</taxon>
        <taxon>Streptophyta</taxon>
        <taxon>Embryophyta</taxon>
        <taxon>Tracheophyta</taxon>
        <taxon>Spermatophyta</taxon>
        <taxon>Magnoliopsida</taxon>
        <taxon>Liliopsida</taxon>
        <taxon>Acoraceae</taxon>
        <taxon>Acorus</taxon>
    </lineage>
</organism>
<reference key="1">
    <citation type="submission" date="2007-11" db="EMBL/GenBank/DDBJ databases">
        <title>The complete chloroplast genome of Acorus americanus.</title>
        <authorList>
            <person name="Peery R.M."/>
            <person name="Chumley T.W."/>
            <person name="Kuehl J.V."/>
            <person name="Boore J.L."/>
            <person name="Raubeson L.A."/>
        </authorList>
    </citation>
    <scope>NUCLEOTIDE SEQUENCE [LARGE SCALE GENOMIC DNA]</scope>
</reference>
<keyword id="KW-0066">ATP synthesis</keyword>
<keyword id="KW-0067">ATP-binding</keyword>
<keyword id="KW-0139">CF(1)</keyword>
<keyword id="KW-0150">Chloroplast</keyword>
<keyword id="KW-0375">Hydrogen ion transport</keyword>
<keyword id="KW-0406">Ion transport</keyword>
<keyword id="KW-0472">Membrane</keyword>
<keyword id="KW-0547">Nucleotide-binding</keyword>
<keyword id="KW-0934">Plastid</keyword>
<keyword id="KW-0793">Thylakoid</keyword>
<keyword id="KW-1278">Translocase</keyword>
<keyword id="KW-0813">Transport</keyword>
<proteinExistence type="inferred from homology"/>
<geneLocation type="chloroplast"/>
<gene>
    <name evidence="1" type="primary">atpA</name>
</gene>
<comment type="function">
    <text evidence="1">Produces ATP from ADP in the presence of a proton gradient across the membrane. The alpha chain is a regulatory subunit.</text>
</comment>
<comment type="catalytic activity">
    <reaction evidence="1">
        <text>ATP + H2O + 4 H(+)(in) = ADP + phosphate + 5 H(+)(out)</text>
        <dbReference type="Rhea" id="RHEA:57720"/>
        <dbReference type="ChEBI" id="CHEBI:15377"/>
        <dbReference type="ChEBI" id="CHEBI:15378"/>
        <dbReference type="ChEBI" id="CHEBI:30616"/>
        <dbReference type="ChEBI" id="CHEBI:43474"/>
        <dbReference type="ChEBI" id="CHEBI:456216"/>
        <dbReference type="EC" id="7.1.2.2"/>
    </reaction>
</comment>
<comment type="subunit">
    <text evidence="1">F-type ATPases have 2 components, CF(1) - the catalytic core - and CF(0) - the membrane proton channel. CF(1) has five subunits: alpha(3), beta(3), gamma(1), delta(1), epsilon(1). CF(0) has four main subunits: a, b, b' and c.</text>
</comment>
<comment type="subcellular location">
    <subcellularLocation>
        <location evidence="1">Plastid</location>
        <location evidence="1">Chloroplast thylakoid membrane</location>
        <topology evidence="1">Peripheral membrane protein</topology>
    </subcellularLocation>
</comment>
<comment type="similarity">
    <text evidence="1">Belongs to the ATPase alpha/beta chains family.</text>
</comment>
<accession>A9LYH0</accession>